<proteinExistence type="inferred from homology"/>
<name>KITH_BACAA</name>
<keyword id="KW-0067">ATP-binding</keyword>
<keyword id="KW-0963">Cytoplasm</keyword>
<keyword id="KW-0237">DNA synthesis</keyword>
<keyword id="KW-0418">Kinase</keyword>
<keyword id="KW-0479">Metal-binding</keyword>
<keyword id="KW-0547">Nucleotide-binding</keyword>
<keyword id="KW-0808">Transferase</keyword>
<keyword id="KW-0862">Zinc</keyword>
<gene>
    <name evidence="1" type="primary">tdk</name>
    <name type="ordered locus">BAA_5600</name>
</gene>
<reference key="1">
    <citation type="submission" date="2009-04" db="EMBL/GenBank/DDBJ databases">
        <title>Genome sequence of Bacillus anthracis A0248.</title>
        <authorList>
            <person name="Dodson R.J."/>
            <person name="Munk A.C."/>
            <person name="Bruce D."/>
            <person name="Detter C."/>
            <person name="Tapia R."/>
            <person name="Sutton G."/>
            <person name="Sims D."/>
            <person name="Brettin T."/>
        </authorList>
    </citation>
    <scope>NUCLEOTIDE SEQUENCE [LARGE SCALE GENOMIC DNA]</scope>
    <source>
        <strain>A0248</strain>
    </source>
</reference>
<dbReference type="EC" id="2.7.1.21" evidence="1"/>
<dbReference type="EMBL" id="CP001598">
    <property type="protein sequence ID" value="ACQ46653.1"/>
    <property type="molecule type" value="Genomic_DNA"/>
</dbReference>
<dbReference type="RefSeq" id="WP_000280866.1">
    <property type="nucleotide sequence ID" value="NC_012659.1"/>
</dbReference>
<dbReference type="SMR" id="C3P292"/>
<dbReference type="GeneID" id="45025160"/>
<dbReference type="KEGG" id="bai:BAA_5600"/>
<dbReference type="HOGENOM" id="CLU_064400_3_0_9"/>
<dbReference type="GO" id="GO:0005829">
    <property type="term" value="C:cytosol"/>
    <property type="evidence" value="ECO:0007669"/>
    <property type="project" value="TreeGrafter"/>
</dbReference>
<dbReference type="GO" id="GO:0005524">
    <property type="term" value="F:ATP binding"/>
    <property type="evidence" value="ECO:0007669"/>
    <property type="project" value="UniProtKB-UniRule"/>
</dbReference>
<dbReference type="GO" id="GO:0004797">
    <property type="term" value="F:thymidine kinase activity"/>
    <property type="evidence" value="ECO:0007669"/>
    <property type="project" value="UniProtKB-UniRule"/>
</dbReference>
<dbReference type="GO" id="GO:0008270">
    <property type="term" value="F:zinc ion binding"/>
    <property type="evidence" value="ECO:0007669"/>
    <property type="project" value="UniProtKB-UniRule"/>
</dbReference>
<dbReference type="GO" id="GO:0071897">
    <property type="term" value="P:DNA biosynthetic process"/>
    <property type="evidence" value="ECO:0007669"/>
    <property type="project" value="UniProtKB-KW"/>
</dbReference>
<dbReference type="GO" id="GO:0046104">
    <property type="term" value="P:thymidine metabolic process"/>
    <property type="evidence" value="ECO:0007669"/>
    <property type="project" value="TreeGrafter"/>
</dbReference>
<dbReference type="FunFam" id="3.30.60.20:FF:000026">
    <property type="entry name" value="Thymidine kinase"/>
    <property type="match status" value="1"/>
</dbReference>
<dbReference type="FunFam" id="3.40.50.300:FF:000384">
    <property type="entry name" value="Thymidine kinase"/>
    <property type="match status" value="1"/>
</dbReference>
<dbReference type="Gene3D" id="3.30.60.20">
    <property type="match status" value="1"/>
</dbReference>
<dbReference type="Gene3D" id="3.40.50.300">
    <property type="entry name" value="P-loop containing nucleotide triphosphate hydrolases"/>
    <property type="match status" value="1"/>
</dbReference>
<dbReference type="HAMAP" id="MF_00124">
    <property type="entry name" value="Thymidine_kinase"/>
    <property type="match status" value="1"/>
</dbReference>
<dbReference type="InterPro" id="IPR027417">
    <property type="entry name" value="P-loop_NTPase"/>
</dbReference>
<dbReference type="InterPro" id="IPR001267">
    <property type="entry name" value="Thymidine_kinase"/>
</dbReference>
<dbReference type="InterPro" id="IPR020633">
    <property type="entry name" value="Thymidine_kinase_CS"/>
</dbReference>
<dbReference type="NCBIfam" id="NF003296">
    <property type="entry name" value="PRK04296.1-1"/>
    <property type="match status" value="1"/>
</dbReference>
<dbReference type="PANTHER" id="PTHR11441">
    <property type="entry name" value="THYMIDINE KINASE"/>
    <property type="match status" value="1"/>
</dbReference>
<dbReference type="PANTHER" id="PTHR11441:SF0">
    <property type="entry name" value="THYMIDINE KINASE, CYTOSOLIC"/>
    <property type="match status" value="1"/>
</dbReference>
<dbReference type="Pfam" id="PF00265">
    <property type="entry name" value="TK"/>
    <property type="match status" value="1"/>
</dbReference>
<dbReference type="PIRSF" id="PIRSF035805">
    <property type="entry name" value="TK_cell"/>
    <property type="match status" value="1"/>
</dbReference>
<dbReference type="SUPFAM" id="SSF57716">
    <property type="entry name" value="Glucocorticoid receptor-like (DNA-binding domain)"/>
    <property type="match status" value="1"/>
</dbReference>
<dbReference type="SUPFAM" id="SSF52540">
    <property type="entry name" value="P-loop containing nucleoside triphosphate hydrolases"/>
    <property type="match status" value="1"/>
</dbReference>
<dbReference type="PROSITE" id="PS00603">
    <property type="entry name" value="TK_CELLULAR_TYPE"/>
    <property type="match status" value="1"/>
</dbReference>
<evidence type="ECO:0000255" key="1">
    <source>
        <dbReference type="HAMAP-Rule" id="MF_00124"/>
    </source>
</evidence>
<sequence length="194" mass="21642">MYLINQNGWIEVICGSMFSGKSEELIRRVRRTQFAKQHAIVFKPCIDNRYSEEDVVSHNGLKVKAVPVSASKDIFKHITEEMDVIAIDEVQFFDGDIVEVVQVLANRGYRVIVAGLDQDFRGLPFGQVPQLMAIAEHVTKLQAVCSACGSPASRTQRLIDGEPAAFDDPIILVGASESYEPRCRHCHAVPTKQR</sequence>
<accession>C3P292</accession>
<protein>
    <recommendedName>
        <fullName evidence="1">Thymidine kinase</fullName>
        <ecNumber evidence="1">2.7.1.21</ecNumber>
    </recommendedName>
</protein>
<comment type="catalytic activity">
    <reaction evidence="1">
        <text>thymidine + ATP = dTMP + ADP + H(+)</text>
        <dbReference type="Rhea" id="RHEA:19129"/>
        <dbReference type="ChEBI" id="CHEBI:15378"/>
        <dbReference type="ChEBI" id="CHEBI:17748"/>
        <dbReference type="ChEBI" id="CHEBI:30616"/>
        <dbReference type="ChEBI" id="CHEBI:63528"/>
        <dbReference type="ChEBI" id="CHEBI:456216"/>
        <dbReference type="EC" id="2.7.1.21"/>
    </reaction>
</comment>
<comment type="subunit">
    <text evidence="1">Homotetramer.</text>
</comment>
<comment type="subcellular location">
    <subcellularLocation>
        <location evidence="1">Cytoplasm</location>
    </subcellularLocation>
</comment>
<comment type="similarity">
    <text evidence="1">Belongs to the thymidine kinase family.</text>
</comment>
<organism>
    <name type="scientific">Bacillus anthracis (strain A0248)</name>
    <dbReference type="NCBI Taxonomy" id="592021"/>
    <lineage>
        <taxon>Bacteria</taxon>
        <taxon>Bacillati</taxon>
        <taxon>Bacillota</taxon>
        <taxon>Bacilli</taxon>
        <taxon>Bacillales</taxon>
        <taxon>Bacillaceae</taxon>
        <taxon>Bacillus</taxon>
        <taxon>Bacillus cereus group</taxon>
    </lineage>
</organism>
<feature type="chain" id="PRO_1000122649" description="Thymidine kinase">
    <location>
        <begin position="1"/>
        <end position="194"/>
    </location>
</feature>
<feature type="active site" description="Proton acceptor" evidence="1">
    <location>
        <position position="89"/>
    </location>
</feature>
<feature type="binding site" evidence="1">
    <location>
        <begin position="15"/>
        <end position="22"/>
    </location>
    <ligand>
        <name>ATP</name>
        <dbReference type="ChEBI" id="CHEBI:30616"/>
    </ligand>
</feature>
<feature type="binding site" evidence="1">
    <location>
        <begin position="88"/>
        <end position="91"/>
    </location>
    <ligand>
        <name>ATP</name>
        <dbReference type="ChEBI" id="CHEBI:30616"/>
    </ligand>
</feature>
<feature type="binding site" evidence="1">
    <location>
        <position position="145"/>
    </location>
    <ligand>
        <name>Zn(2+)</name>
        <dbReference type="ChEBI" id="CHEBI:29105"/>
    </ligand>
</feature>
<feature type="binding site" evidence="1">
    <location>
        <position position="148"/>
    </location>
    <ligand>
        <name>Zn(2+)</name>
        <dbReference type="ChEBI" id="CHEBI:29105"/>
    </ligand>
</feature>
<feature type="binding site" evidence="1">
    <location>
        <position position="183"/>
    </location>
    <ligand>
        <name>Zn(2+)</name>
        <dbReference type="ChEBI" id="CHEBI:29105"/>
    </ligand>
</feature>
<feature type="binding site" evidence="1">
    <location>
        <position position="186"/>
    </location>
    <ligand>
        <name>Zn(2+)</name>
        <dbReference type="ChEBI" id="CHEBI:29105"/>
    </ligand>
</feature>